<protein>
    <recommendedName>
        <fullName evidence="18 20">Serine/threonine-protein kinase par-4</fullName>
        <ecNumber>2.7.11.1</ecNumber>
    </recommendedName>
</protein>
<evidence type="ECO:0000250" key="1">
    <source>
        <dbReference type="UniProtKB" id="P28523"/>
    </source>
</evidence>
<evidence type="ECO:0000250" key="2">
    <source>
        <dbReference type="UniProtKB" id="Q15831"/>
    </source>
</evidence>
<evidence type="ECO:0000255" key="3"/>
<evidence type="ECO:0000255" key="4">
    <source>
        <dbReference type="PROSITE-ProRule" id="PRU00159"/>
    </source>
</evidence>
<evidence type="ECO:0000255" key="5">
    <source>
        <dbReference type="PROSITE-ProRule" id="PRU10027"/>
    </source>
</evidence>
<evidence type="ECO:0000256" key="6">
    <source>
        <dbReference type="SAM" id="MobiDB-lite"/>
    </source>
</evidence>
<evidence type="ECO:0000269" key="7">
    <source>
    </source>
</evidence>
<evidence type="ECO:0000269" key="8">
    <source>
    </source>
</evidence>
<evidence type="ECO:0000269" key="9">
    <source>
    </source>
</evidence>
<evidence type="ECO:0000269" key="10">
    <source>
    </source>
</evidence>
<evidence type="ECO:0000269" key="11">
    <source>
    </source>
</evidence>
<evidence type="ECO:0000269" key="12">
    <source>
    </source>
</evidence>
<evidence type="ECO:0000269" key="13">
    <source>
    </source>
</evidence>
<evidence type="ECO:0000269" key="14">
    <source>
    </source>
</evidence>
<evidence type="ECO:0000269" key="15">
    <source>
    </source>
</evidence>
<evidence type="ECO:0000269" key="16">
    <source>
    </source>
</evidence>
<evidence type="ECO:0000269" key="17">
    <source>
    </source>
</evidence>
<evidence type="ECO:0000303" key="18">
    <source>
    </source>
</evidence>
<evidence type="ECO:0000305" key="19"/>
<evidence type="ECO:0000312" key="20">
    <source>
        <dbReference type="EMBL" id="AAD45355.1"/>
    </source>
</evidence>
<evidence type="ECO:0000312" key="21">
    <source>
        <dbReference type="EMBL" id="CAC14418.2"/>
    </source>
</evidence>
<comment type="function">
    <text evidence="7 8 9 10 11 12 13 14 15 16">Required for cytoplasmic partitioning and asymmetric cell division in early embryogenesis (PubMed:10704392). Controls the asymmetric cell division of the Q.p neuroblast lineage (PubMed:23267054). Involved in mediating cell polarization via regulation of anillin family scaffold proteins (PubMed:21276723). Phosphorylates and restricts the asymmetry effectors mex-5 and mex-6 to the anterior cytoplasm of the zygote and maintains these phosphorylations until fertilization (PubMed:18842813). May phosphorylate par-1. Required for strd-1 localization to the cell cortex of early embryos and may be required for strd-1 protein stabilization. May regulate the integrity of the early embryonic cortex in a strd-1-dependent manner (PubMed:20110331). Phosphorylates and regulates aak-2 in response to oxidative stress and during dauer development (PubMed:18408008, PubMed:20110331). May also play a role in motility, behavioral response, regulation of lifespan and dauer formation through this pathway (PubMed:15574588, PubMed:18408008). Required to establish germline stem cell (GSC) quiescence during dauer development (PubMed:20110331). Acts downstream of unc-40 in dendrite outgrowth (PubMed:21186357). May play a role in cell shedding during embryogenesis, probably by phosphorylating pig-1 (PubMed:22801495).</text>
</comment>
<comment type="catalytic activity">
    <reaction evidence="2">
        <text>L-seryl-[protein] + ATP = O-phospho-L-seryl-[protein] + ADP + H(+)</text>
        <dbReference type="Rhea" id="RHEA:17989"/>
        <dbReference type="Rhea" id="RHEA-COMP:9863"/>
        <dbReference type="Rhea" id="RHEA-COMP:11604"/>
        <dbReference type="ChEBI" id="CHEBI:15378"/>
        <dbReference type="ChEBI" id="CHEBI:29999"/>
        <dbReference type="ChEBI" id="CHEBI:30616"/>
        <dbReference type="ChEBI" id="CHEBI:83421"/>
        <dbReference type="ChEBI" id="CHEBI:456216"/>
        <dbReference type="EC" id="2.7.11.1"/>
    </reaction>
</comment>
<comment type="catalytic activity">
    <reaction evidence="2">
        <text>L-threonyl-[protein] + ATP = O-phospho-L-threonyl-[protein] + ADP + H(+)</text>
        <dbReference type="Rhea" id="RHEA:46608"/>
        <dbReference type="Rhea" id="RHEA-COMP:11060"/>
        <dbReference type="Rhea" id="RHEA-COMP:11605"/>
        <dbReference type="ChEBI" id="CHEBI:15378"/>
        <dbReference type="ChEBI" id="CHEBI:30013"/>
        <dbReference type="ChEBI" id="CHEBI:30616"/>
        <dbReference type="ChEBI" id="CHEBI:61977"/>
        <dbReference type="ChEBI" id="CHEBI:456216"/>
        <dbReference type="EC" id="2.7.11.1"/>
    </reaction>
</comment>
<comment type="cofactor">
    <cofactor evidence="2">
        <name>Mg(2+)</name>
        <dbReference type="ChEBI" id="CHEBI:18420"/>
    </cofactor>
    <cofactor evidence="2">
        <name>Mn(2+)</name>
        <dbReference type="ChEBI" id="CHEBI:29035"/>
    </cofactor>
</comment>
<comment type="subunit">
    <text evidence="12">Interacts with strd-1.</text>
</comment>
<comment type="subcellular location">
    <subcellularLocation>
        <location evidence="7">Cytoplasm</location>
        <location evidence="7">Cell cortex</location>
    </subcellularLocation>
</comment>
<comment type="alternative products">
    <event type="alternative splicing"/>
    <isoform>
        <id>Q9GN62-1</id>
        <name>a</name>
        <sequence type="displayed"/>
    </isoform>
    <isoform>
        <id>Q9GN62-2</id>
        <name>b</name>
        <sequence type="described" ref="VSP_043926"/>
    </isoform>
    <isoform>
        <id>Q9GN62-3</id>
        <name>c</name>
        <sequence type="described" ref="VSP_043927"/>
    </isoform>
</comment>
<comment type="tissue specificity">
    <text evidence="7">Expressed in the gonads, oocytes and early embryos (at protein level).</text>
</comment>
<comment type="developmental stage">
    <text evidence="7">Cortical distribution begins at the late 1-cell stage, is more pronounced at the 2- and 4-cell stages and is reduced at late stages of embryonic development.</text>
</comment>
<comment type="disruption phenotype">
    <text evidence="7 8 9 11 13 14 17">Maternal effect lethality. Blastomeres cleave synchronously until the fourth or fifth round, when synchrony breaks down. Cells also fail to segregate P granules, with the posteriormost blastomere tending to contain more P granules than other blastomeres. Terminal stage embryos fail to produce intestinal cells. Adult worms exhibit temperature-dependent reduction of oxidative-stress induced aak-2 phosphorylation, hypersensitivity to oxidative stress, slow body bending, abnormal modulation of head oscillation, and partially suppress the lifespan extension and dauer-constitutive phenotypes of aak-2 mutants. Cytokinesis cell polarity defeats; mispositioning of anterior PAR proteins and defects in contractile ring ingression during cytokinesis due to abnormal actomyosin contractility. Shortened dendrites.</text>
</comment>
<comment type="similarity">
    <text evidence="3">Belongs to the protein kinase superfamily. CAMK Ser/Thr protein kinase family. LKB1 subfamily.</text>
</comment>
<accession>Q9GN62</accession>
<accession>G5EES7</accession>
<accession>G5EGA8</accession>
<accession>Q9Y0C1</accession>
<feature type="chain" id="PRO_0000383653" description="Serine/threonine-protein kinase par-4">
    <location>
        <begin position="1"/>
        <end position="617"/>
    </location>
</feature>
<feature type="domain" description="Protein kinase" evidence="4">
    <location>
        <begin position="183"/>
        <end position="446"/>
    </location>
</feature>
<feature type="region of interest" description="Disordered" evidence="6">
    <location>
        <begin position="1"/>
        <end position="59"/>
    </location>
</feature>
<feature type="region of interest" description="Disordered" evidence="6">
    <location>
        <begin position="523"/>
        <end position="617"/>
    </location>
</feature>
<feature type="compositionally biased region" description="Polar residues" evidence="6">
    <location>
        <begin position="1"/>
        <end position="11"/>
    </location>
</feature>
<feature type="compositionally biased region" description="Acidic residues" evidence="6">
    <location>
        <begin position="46"/>
        <end position="57"/>
    </location>
</feature>
<feature type="compositionally biased region" description="Pro residues" evidence="6">
    <location>
        <begin position="587"/>
        <end position="597"/>
    </location>
</feature>
<feature type="active site" description="Proton acceptor" evidence="1 4 5">
    <location>
        <position position="310"/>
    </location>
</feature>
<feature type="binding site" evidence="1 4">
    <location>
        <begin position="189"/>
        <end position="197"/>
    </location>
    <ligand>
        <name>ATP</name>
        <dbReference type="ChEBI" id="CHEBI:30616"/>
    </ligand>
</feature>
<feature type="binding site" evidence="1 4">
    <location>
        <position position="212"/>
    </location>
    <ligand>
        <name>ATP</name>
        <dbReference type="ChEBI" id="CHEBI:30616"/>
    </ligand>
</feature>
<feature type="splice variant" id="VSP_043926" description="In isoform b." evidence="19">
    <location>
        <begin position="1"/>
        <end position="141"/>
    </location>
</feature>
<feature type="splice variant" id="VSP_043927" description="In isoform c." evidence="19">
    <location>
        <begin position="161"/>
        <end position="164"/>
    </location>
</feature>
<keyword id="KW-0025">Alternative splicing</keyword>
<keyword id="KW-0067">ATP-binding</keyword>
<keyword id="KW-0963">Cytoplasm</keyword>
<keyword id="KW-0217">Developmental protein</keyword>
<keyword id="KW-0418">Kinase</keyword>
<keyword id="KW-0460">Magnesium</keyword>
<keyword id="KW-0464">Manganese</keyword>
<keyword id="KW-0479">Metal-binding</keyword>
<keyword id="KW-0547">Nucleotide-binding</keyword>
<keyword id="KW-1185">Reference proteome</keyword>
<keyword id="KW-0723">Serine/threonine-protein kinase</keyword>
<keyword id="KW-0346">Stress response</keyword>
<keyword id="KW-0808">Transferase</keyword>
<sequence>MDAPSTSSGAQSKLLMPGDDEADEDHQNRGDPNLQQKQKIQLNVDPDYDDDEDDDCFIDGCEASAPITRELVDGAIERRSKDRNVKMSIGVYDEYDDDDDDEEETEEDQRRRFVEGIRNIRHKQQESFDLEEHPIPVESEAMRQFINQQVNNAMMFNQDNSEFQHIEFEPIVKQKGPKIIEGYMWGGQIGTGSYGKVKECIDMYTLTRRAVKIMKYDKLRKITNGWENIRSEMSILRRMNHRNVIKLIEIFNIPAKGKVYMVFEYCIGSVQQLLDMEPARRLTIGESHAIFIELCQGLNYLHSKRVSHKDIKPGNLLVSIDFTVKICDFGVAEQINLFQRDGRCTKVNGTPKFQPPECIYGNHDFFDGYKADMWSAGVTLYNLVSGKYPFEKPVLLKLYECIGTEPLQMPTNVQLTKDLQDLLTKLLEKDFNERPTCLETMIHPWFLSTFPEDQGLGRIMERMRTGDRPLTMLSSMTALYDGITPEDELIIEDNLGIIQQILPINLTSEAVLERGSFPGFKFLEAKPGDGPDGVEGSEDSAAPLGPQRRPSSRSMPTCAPPGPAAGNAQNSTAENGAETDGVASASDPPPTAAPGAPPRRRKRNFFSCIFRSRTDSA</sequence>
<reference evidence="19 20" key="1">
    <citation type="journal article" date="2000" name="Development">
        <title>The Caenorhabditis elegans par-4 gene encodes a putative serine-threonine kinase required for establishing embryonic asymmetry.</title>
        <authorList>
            <person name="Watts J.L."/>
            <person name="Morton D.G."/>
            <person name="Bestman J."/>
            <person name="Kemphues K.J."/>
        </authorList>
    </citation>
    <scope>NUCLEOTIDE SEQUENCE [MRNA] (ISOFORM A)</scope>
    <scope>FUNCTION</scope>
    <scope>SUBCELLULAR LOCATION</scope>
    <scope>TISSUE SPECIFICITY</scope>
    <scope>DEVELOPMENTAL STAGE</scope>
    <scope>DISRUPTION PHENOTYPE</scope>
    <source>
        <strain evidence="20">Bristol N2</strain>
    </source>
</reference>
<reference evidence="21" key="2">
    <citation type="journal article" date="1998" name="Science">
        <title>Genome sequence of the nematode C. elegans: a platform for investigating biology.</title>
        <authorList>
            <consortium name="The C. elegans sequencing consortium"/>
        </authorList>
    </citation>
    <scope>NUCLEOTIDE SEQUENCE [LARGE SCALE GENOMIC DNA]</scope>
    <scope>ALTERNATIVE SPLICING</scope>
    <source>
        <strain evidence="21">Bristol N2</strain>
    </source>
</reference>
<reference evidence="19" key="3">
    <citation type="journal article" date="1988" name="Cell">
        <title>Identification of genes required for cytoplasmic localization in early C. elegans embryos.</title>
        <authorList>
            <person name="Kemphues K.J."/>
            <person name="Priess J.R."/>
            <person name="Morton D.G."/>
            <person name="Cheng N.S."/>
        </authorList>
    </citation>
    <scope>DISRUPTION PHENOTYPE</scope>
</reference>
<reference evidence="19" key="4">
    <citation type="journal article" date="2004" name="Genes Dev.">
        <title>The AMP-activated protein kinase AAK-2 links energy levels and insulin-like signals to lifespan in C. elegans.</title>
        <authorList>
            <person name="Apfeld J."/>
            <person name="O'Connor G."/>
            <person name="McDonagh T."/>
            <person name="DiStefano P.S."/>
            <person name="Curtis R."/>
        </authorList>
    </citation>
    <scope>FUNCTION</scope>
    <scope>DISRUPTION PHENOTYPE</scope>
</reference>
<reference evidence="19" key="5">
    <citation type="journal article" date="2008" name="Development">
        <title>MEX-5 asymmetry in one-cell C. elegans embryos requires PAR-4- and PAR-1-dependent phosphorylation.</title>
        <authorList>
            <person name="Tenlen J.R."/>
            <person name="Molk J.N."/>
            <person name="London N."/>
            <person name="Page B.D."/>
            <person name="Priess J.R."/>
        </authorList>
    </citation>
    <scope>FUNCTION</scope>
</reference>
<reference evidence="19" key="6">
    <citation type="journal article" date="2008" name="J. Biol. Chem.">
        <title>The Caenorhabditis elegans AMP-activated protein kinase AAK-2 is phosphorylated by LKB1 and is required for resistance to oxidative stress and for normal motility and foraging behavior.</title>
        <authorList>
            <person name="Lee H."/>
            <person name="Cho J.S."/>
            <person name="Lambacher N."/>
            <person name="Lee J."/>
            <person name="Lee S.J."/>
            <person name="Lee T.H."/>
            <person name="Gartner A."/>
            <person name="Koo H.S."/>
        </authorList>
    </citation>
    <scope>FUNCTION</scope>
    <scope>DISRUPTION PHENOTYPE</scope>
</reference>
<reference key="7">
    <citation type="journal article" date="2010" name="Development">
        <title>C. elegans STRADalpha and SAD cooperatively regulate neuronal polarity and synaptic organization.</title>
        <authorList>
            <person name="Kim J.S."/>
            <person name="Hung W."/>
            <person name="Narbonne P."/>
            <person name="Roy R."/>
            <person name="Zhen M."/>
        </authorList>
    </citation>
    <scope>FUNCTION</scope>
    <scope>DISRUPTION PHENOTYPE</scope>
</reference>
<reference key="8">
    <citation type="journal article" date="2010" name="Development">
        <title>Differential requirements for STRAD in LKB1-dependent functions in C. elegans.</title>
        <authorList>
            <person name="Narbonne P."/>
            <person name="Hyenne V."/>
            <person name="Li S."/>
            <person name="Labbe J.C."/>
            <person name="Roy R."/>
        </authorList>
    </citation>
    <scope>FUNCTION</scope>
    <scope>INTERACTION WITH STRD-1</scope>
</reference>
<reference key="9">
    <citation type="journal article" date="2011" name="Curr. Biol.">
        <title>PAR-4/LKB1 mobilizes nonmuscle myosin through anillin to regulate C. elegans embryonic polarization and cytokinesis.</title>
        <authorList>
            <person name="Chartier N.T."/>
            <person name="Salazar Ospina D.P."/>
            <person name="Benkemoun L."/>
            <person name="Mayer M."/>
            <person name="Grill S.W."/>
            <person name="Maddox A.S."/>
            <person name="Labbe J.C."/>
        </authorList>
    </citation>
    <scope>FUNCTION</scope>
    <scope>DISRUPTION PHENOTYPE</scope>
</reference>
<reference key="10">
    <citation type="journal article" date="2011" name="Nat. Neurosci.">
        <title>UNC-6 and UNC-40 promote dendritic growth through PAR-4 in Caenorhabditis elegans neurons.</title>
        <authorList>
            <person name="Teichmann H.M."/>
            <person name="Shen K."/>
        </authorList>
    </citation>
    <scope>FUNCTION</scope>
    <scope>DISRUPTION PHENOTYPE</scope>
</reference>
<reference key="11">
    <citation type="journal article" date="2012" name="Nature">
        <title>Programmed elimination of cells by caspase-independent cell extrusion in C. elegans.</title>
        <authorList>
            <person name="Denning D.P."/>
            <person name="Hatch V."/>
            <person name="Horvitz H.R."/>
        </authorList>
    </citation>
    <scope>FUNCTION</scope>
</reference>
<reference key="12">
    <citation type="journal article" date="2013" name="Genetics">
        <title>Caenorhabditis elegans PIG-1/MELK acts in a conserved PAR-4/LKB1 polarity pathway to promote asymmetric neuroblast divisions.</title>
        <authorList>
            <person name="Chien S.C."/>
            <person name="Brinkmann E.M."/>
            <person name="Teuliere J."/>
            <person name="Garriga G."/>
        </authorList>
    </citation>
    <scope>FUNCTION</scope>
</reference>
<name>PAR4_CAEEL</name>
<dbReference type="EC" id="2.7.11.1"/>
<dbReference type="EMBL" id="AF160189">
    <property type="protein sequence ID" value="AAD45355.1"/>
    <property type="molecule type" value="mRNA"/>
</dbReference>
<dbReference type="EMBL" id="AL132898">
    <property type="protein sequence ID" value="CAC14418.2"/>
    <property type="molecule type" value="Genomic_DNA"/>
</dbReference>
<dbReference type="EMBL" id="AL132863">
    <property type="protein sequence ID" value="CAC14418.2"/>
    <property type="status" value="JOINED"/>
    <property type="molecule type" value="Genomic_DNA"/>
</dbReference>
<dbReference type="EMBL" id="AL132898">
    <property type="protein sequence ID" value="CCA65681.1"/>
    <property type="molecule type" value="Genomic_DNA"/>
</dbReference>
<dbReference type="EMBL" id="AL132863">
    <property type="protein sequence ID" value="CCA65681.1"/>
    <property type="status" value="JOINED"/>
    <property type="molecule type" value="Genomic_DNA"/>
</dbReference>
<dbReference type="EMBL" id="AL132898">
    <property type="protein sequence ID" value="CCA65682.1"/>
    <property type="molecule type" value="Genomic_DNA"/>
</dbReference>
<dbReference type="EMBL" id="AL132863">
    <property type="protein sequence ID" value="CCA65682.1"/>
    <property type="status" value="JOINED"/>
    <property type="molecule type" value="Genomic_DNA"/>
</dbReference>
<dbReference type="RefSeq" id="NP_001256778.1">
    <property type="nucleotide sequence ID" value="NM_001269849.1"/>
</dbReference>
<dbReference type="RefSeq" id="NP_001256779.1">
    <property type="nucleotide sequence ID" value="NM_001269850.1"/>
</dbReference>
<dbReference type="RefSeq" id="NP_001256780.1">
    <property type="nucleotide sequence ID" value="NM_001269851.1"/>
</dbReference>
<dbReference type="RefSeq" id="NP_001366977.1">
    <molecule id="Q9GN62-1"/>
    <property type="nucleotide sequence ID" value="NM_001380857.2"/>
</dbReference>
<dbReference type="RefSeq" id="NP_001367284.1">
    <molecule id="Q9GN62-2"/>
    <property type="nucleotide sequence ID" value="NM_001380859.1"/>
</dbReference>
<dbReference type="RefSeq" id="NP_001367285.1">
    <molecule id="Q9GN62-3"/>
    <property type="nucleotide sequence ID" value="NM_001380858.1"/>
</dbReference>
<dbReference type="SMR" id="Q9GN62"/>
<dbReference type="BioGRID" id="45156">
    <property type="interactions" value="3"/>
</dbReference>
<dbReference type="FunCoup" id="Q9GN62">
    <property type="interactions" value="763"/>
</dbReference>
<dbReference type="STRING" id="6239.Y59A8B.14a.1"/>
<dbReference type="PaxDb" id="6239-Y59A8B.14a"/>
<dbReference type="PeptideAtlas" id="Q9GN62"/>
<dbReference type="EnsemblMetazoa" id="Y59A8B.14a.1">
    <molecule id="Q9GN62-1"/>
    <property type="protein sequence ID" value="Y59A8B.14a.1"/>
    <property type="gene ID" value="WBGene00003919"/>
</dbReference>
<dbReference type="EnsemblMetazoa" id="Y59A8B.14b.1">
    <molecule id="Q9GN62-2"/>
    <property type="protein sequence ID" value="Y59A8B.14b.1"/>
    <property type="gene ID" value="WBGene00003919"/>
</dbReference>
<dbReference type="EnsemblMetazoa" id="Y59A8B.14c.1">
    <molecule id="Q9GN62-3"/>
    <property type="protein sequence ID" value="Y59A8B.14c.1"/>
    <property type="gene ID" value="WBGene00003919"/>
</dbReference>
<dbReference type="GeneID" id="180185"/>
<dbReference type="UCSC" id="Y59A8B.14">
    <molecule id="Q9GN62-1"/>
    <property type="organism name" value="c. elegans"/>
</dbReference>
<dbReference type="AGR" id="WB:WBGene00003919"/>
<dbReference type="WormBase" id="Y59A8B.14a">
    <molecule id="Q9GN62-1"/>
    <property type="protein sequence ID" value="CE27410"/>
    <property type="gene ID" value="WBGene00003919"/>
    <property type="gene designation" value="par-4"/>
</dbReference>
<dbReference type="WormBase" id="Y59A8B.14b">
    <molecule id="Q9GN62-2"/>
    <property type="protein sequence ID" value="CE46046"/>
    <property type="gene ID" value="WBGene00003919"/>
    <property type="gene designation" value="par-4"/>
</dbReference>
<dbReference type="WormBase" id="Y59A8B.14c">
    <molecule id="Q9GN62-3"/>
    <property type="protein sequence ID" value="CE46081"/>
    <property type="gene ID" value="WBGene00003919"/>
    <property type="gene designation" value="par-4"/>
</dbReference>
<dbReference type="eggNOG" id="KOG0583">
    <property type="taxonomic scope" value="Eukaryota"/>
</dbReference>
<dbReference type="GeneTree" id="ENSGT00940000158050"/>
<dbReference type="InParanoid" id="Q9GN62"/>
<dbReference type="OMA" id="GYKADMW"/>
<dbReference type="OrthoDB" id="68483at2759"/>
<dbReference type="PhylomeDB" id="Q9GN62"/>
<dbReference type="PRO" id="PR:Q9GN62"/>
<dbReference type="Proteomes" id="UP000001940">
    <property type="component" value="Chromosome V"/>
</dbReference>
<dbReference type="Bgee" id="WBGene00003919">
    <property type="expression patterns" value="Expressed in adult organism and 3 other cell types or tissues"/>
</dbReference>
<dbReference type="GO" id="GO:0005938">
    <property type="term" value="C:cell cortex"/>
    <property type="evidence" value="ECO:0000314"/>
    <property type="project" value="WormBase"/>
</dbReference>
<dbReference type="GO" id="GO:0005737">
    <property type="term" value="C:cytoplasm"/>
    <property type="evidence" value="ECO:0000314"/>
    <property type="project" value="WormBase"/>
</dbReference>
<dbReference type="GO" id="GO:0005524">
    <property type="term" value="F:ATP binding"/>
    <property type="evidence" value="ECO:0007669"/>
    <property type="project" value="UniProtKB-KW"/>
</dbReference>
<dbReference type="GO" id="GO:0005516">
    <property type="term" value="F:calmodulin binding"/>
    <property type="evidence" value="ECO:0000353"/>
    <property type="project" value="WormBase"/>
</dbReference>
<dbReference type="GO" id="GO:0046872">
    <property type="term" value="F:metal ion binding"/>
    <property type="evidence" value="ECO:0007669"/>
    <property type="project" value="UniProtKB-KW"/>
</dbReference>
<dbReference type="GO" id="GO:0106310">
    <property type="term" value="F:protein serine kinase activity"/>
    <property type="evidence" value="ECO:0007669"/>
    <property type="project" value="RHEA"/>
</dbReference>
<dbReference type="GO" id="GO:0004674">
    <property type="term" value="F:protein serine/threonine kinase activity"/>
    <property type="evidence" value="ECO:0000315"/>
    <property type="project" value="WormBase"/>
</dbReference>
<dbReference type="GO" id="GO:0008356">
    <property type="term" value="P:asymmetric cell division"/>
    <property type="evidence" value="ECO:0000315"/>
    <property type="project" value="WormBase"/>
</dbReference>
<dbReference type="GO" id="GO:0055059">
    <property type="term" value="P:asymmetric neuroblast division"/>
    <property type="evidence" value="ECO:0000315"/>
    <property type="project" value="WormBase"/>
</dbReference>
<dbReference type="GO" id="GO:0045167">
    <property type="term" value="P:asymmetric protein localization involved in cell fate determination"/>
    <property type="evidence" value="ECO:0000315"/>
    <property type="project" value="WormBase"/>
</dbReference>
<dbReference type="GO" id="GO:0030154">
    <property type="term" value="P:cell differentiation"/>
    <property type="evidence" value="ECO:0000315"/>
    <property type="project" value="WormBase"/>
</dbReference>
<dbReference type="GO" id="GO:0008340">
    <property type="term" value="P:determination of adult lifespan"/>
    <property type="evidence" value="ECO:0000316"/>
    <property type="project" value="WormBase"/>
</dbReference>
<dbReference type="GO" id="GO:0030010">
    <property type="term" value="P:establishment of cell polarity"/>
    <property type="evidence" value="ECO:0000315"/>
    <property type="project" value="WormBase"/>
</dbReference>
<dbReference type="GO" id="GO:0007163">
    <property type="term" value="P:establishment or maintenance of cell polarity"/>
    <property type="evidence" value="ECO:0000315"/>
    <property type="project" value="UniProtKB"/>
</dbReference>
<dbReference type="GO" id="GO:0061066">
    <property type="term" value="P:positive regulation of dauer larval development"/>
    <property type="evidence" value="ECO:0000316"/>
    <property type="project" value="WormBase"/>
</dbReference>
<dbReference type="GO" id="GO:0040017">
    <property type="term" value="P:positive regulation of locomotion"/>
    <property type="evidence" value="ECO:0000315"/>
    <property type="project" value="WormBase"/>
</dbReference>
<dbReference type="GO" id="GO:0031991">
    <property type="term" value="P:regulation of actomyosin contractile ring contraction"/>
    <property type="evidence" value="ECO:0000315"/>
    <property type="project" value="UniProtKB"/>
</dbReference>
<dbReference type="GO" id="GO:0006979">
    <property type="term" value="P:response to oxidative stress"/>
    <property type="evidence" value="ECO:0000315"/>
    <property type="project" value="WormBase"/>
</dbReference>
<dbReference type="FunFam" id="1.10.510.10:FF:001234">
    <property type="entry name" value="Serine/threonine-protein kinase par-4"/>
    <property type="match status" value="1"/>
</dbReference>
<dbReference type="FunFam" id="3.30.200.20:FF:001122">
    <property type="entry name" value="Serine/threonine-protein kinase par-4"/>
    <property type="match status" value="1"/>
</dbReference>
<dbReference type="Gene3D" id="3.30.200.20">
    <property type="entry name" value="Phosphorylase Kinase, domain 1"/>
    <property type="match status" value="1"/>
</dbReference>
<dbReference type="Gene3D" id="1.10.510.10">
    <property type="entry name" value="Transferase(Phosphotransferase) domain 1"/>
    <property type="match status" value="1"/>
</dbReference>
<dbReference type="InterPro" id="IPR011009">
    <property type="entry name" value="Kinase-like_dom_sf"/>
</dbReference>
<dbReference type="InterPro" id="IPR000719">
    <property type="entry name" value="Prot_kinase_dom"/>
</dbReference>
<dbReference type="InterPro" id="IPR017441">
    <property type="entry name" value="Protein_kinase_ATP_BS"/>
</dbReference>
<dbReference type="InterPro" id="IPR008271">
    <property type="entry name" value="Ser/Thr_kinase_AS"/>
</dbReference>
<dbReference type="PANTHER" id="PTHR24346">
    <property type="entry name" value="MAP/MICROTUBULE AFFINITY-REGULATING KINASE"/>
    <property type="match status" value="1"/>
</dbReference>
<dbReference type="PANTHER" id="PTHR24346:SF94">
    <property type="entry name" value="NON-SPECIFIC SERINE_THREONINE PROTEIN KINASE"/>
    <property type="match status" value="1"/>
</dbReference>
<dbReference type="Pfam" id="PF00069">
    <property type="entry name" value="Pkinase"/>
    <property type="match status" value="1"/>
</dbReference>
<dbReference type="SMART" id="SM00220">
    <property type="entry name" value="S_TKc"/>
    <property type="match status" value="1"/>
</dbReference>
<dbReference type="SUPFAM" id="SSF56112">
    <property type="entry name" value="Protein kinase-like (PK-like)"/>
    <property type="match status" value="1"/>
</dbReference>
<dbReference type="PROSITE" id="PS00107">
    <property type="entry name" value="PROTEIN_KINASE_ATP"/>
    <property type="match status" value="1"/>
</dbReference>
<dbReference type="PROSITE" id="PS50011">
    <property type="entry name" value="PROTEIN_KINASE_DOM"/>
    <property type="match status" value="1"/>
</dbReference>
<dbReference type="PROSITE" id="PS00108">
    <property type="entry name" value="PROTEIN_KINASE_ST"/>
    <property type="match status" value="1"/>
</dbReference>
<proteinExistence type="evidence at protein level"/>
<organism>
    <name type="scientific">Caenorhabditis elegans</name>
    <dbReference type="NCBI Taxonomy" id="6239"/>
    <lineage>
        <taxon>Eukaryota</taxon>
        <taxon>Metazoa</taxon>
        <taxon>Ecdysozoa</taxon>
        <taxon>Nematoda</taxon>
        <taxon>Chromadorea</taxon>
        <taxon>Rhabditida</taxon>
        <taxon>Rhabditina</taxon>
        <taxon>Rhabditomorpha</taxon>
        <taxon>Rhabditoidea</taxon>
        <taxon>Rhabditidae</taxon>
        <taxon>Peloderinae</taxon>
        <taxon>Caenorhabditis</taxon>
    </lineage>
</organism>
<gene>
    <name type="primary">par-4</name>
    <name type="ORF">Y59A8B.14</name>
</gene>